<dbReference type="EMBL" id="AE017125">
    <property type="protein sequence ID" value="AAP77707.1"/>
    <property type="molecule type" value="Genomic_DNA"/>
</dbReference>
<dbReference type="SMR" id="Q7VH57"/>
<dbReference type="STRING" id="235279.HH_1110"/>
<dbReference type="KEGG" id="hhe:HH_1110"/>
<dbReference type="eggNOG" id="COG0593">
    <property type="taxonomic scope" value="Bacteria"/>
</dbReference>
<dbReference type="HOGENOM" id="CLU_026910_3_1_7"/>
<dbReference type="Proteomes" id="UP000002495">
    <property type="component" value="Chromosome"/>
</dbReference>
<dbReference type="GO" id="GO:0005737">
    <property type="term" value="C:cytoplasm"/>
    <property type="evidence" value="ECO:0007669"/>
    <property type="project" value="UniProtKB-SubCell"/>
</dbReference>
<dbReference type="GO" id="GO:0005886">
    <property type="term" value="C:plasma membrane"/>
    <property type="evidence" value="ECO:0007669"/>
    <property type="project" value="TreeGrafter"/>
</dbReference>
<dbReference type="GO" id="GO:0005524">
    <property type="term" value="F:ATP binding"/>
    <property type="evidence" value="ECO:0007669"/>
    <property type="project" value="UniProtKB-UniRule"/>
</dbReference>
<dbReference type="GO" id="GO:0016887">
    <property type="term" value="F:ATP hydrolysis activity"/>
    <property type="evidence" value="ECO:0007669"/>
    <property type="project" value="InterPro"/>
</dbReference>
<dbReference type="GO" id="GO:0003688">
    <property type="term" value="F:DNA replication origin binding"/>
    <property type="evidence" value="ECO:0007669"/>
    <property type="project" value="UniProtKB-UniRule"/>
</dbReference>
<dbReference type="GO" id="GO:0008289">
    <property type="term" value="F:lipid binding"/>
    <property type="evidence" value="ECO:0007669"/>
    <property type="project" value="UniProtKB-KW"/>
</dbReference>
<dbReference type="GO" id="GO:0006270">
    <property type="term" value="P:DNA replication initiation"/>
    <property type="evidence" value="ECO:0007669"/>
    <property type="project" value="UniProtKB-UniRule"/>
</dbReference>
<dbReference type="GO" id="GO:0006275">
    <property type="term" value="P:regulation of DNA replication"/>
    <property type="evidence" value="ECO:0007669"/>
    <property type="project" value="UniProtKB-UniRule"/>
</dbReference>
<dbReference type="CDD" id="cd00009">
    <property type="entry name" value="AAA"/>
    <property type="match status" value="1"/>
</dbReference>
<dbReference type="CDD" id="cd06571">
    <property type="entry name" value="Bac_DnaA_C"/>
    <property type="match status" value="1"/>
</dbReference>
<dbReference type="FunFam" id="3.40.50.300:FF:000668">
    <property type="entry name" value="Chromosomal replication initiator protein DnaA"/>
    <property type="match status" value="1"/>
</dbReference>
<dbReference type="Gene3D" id="1.10.1750.10">
    <property type="match status" value="1"/>
</dbReference>
<dbReference type="Gene3D" id="1.10.8.60">
    <property type="match status" value="1"/>
</dbReference>
<dbReference type="Gene3D" id="3.30.300.180">
    <property type="match status" value="1"/>
</dbReference>
<dbReference type="Gene3D" id="3.40.50.300">
    <property type="entry name" value="P-loop containing nucleotide triphosphate hydrolases"/>
    <property type="match status" value="1"/>
</dbReference>
<dbReference type="HAMAP" id="MF_00377">
    <property type="entry name" value="DnaA_bact"/>
    <property type="match status" value="1"/>
</dbReference>
<dbReference type="InterPro" id="IPR003593">
    <property type="entry name" value="AAA+_ATPase"/>
</dbReference>
<dbReference type="InterPro" id="IPR001957">
    <property type="entry name" value="Chromosome_initiator_DnaA"/>
</dbReference>
<dbReference type="InterPro" id="IPR020591">
    <property type="entry name" value="Chromosome_initiator_DnaA-like"/>
</dbReference>
<dbReference type="InterPro" id="IPR018312">
    <property type="entry name" value="Chromosome_initiator_DnaA_CS"/>
</dbReference>
<dbReference type="InterPro" id="IPR013159">
    <property type="entry name" value="DnaA_C"/>
</dbReference>
<dbReference type="InterPro" id="IPR013317">
    <property type="entry name" value="DnaA_dom"/>
</dbReference>
<dbReference type="InterPro" id="IPR024633">
    <property type="entry name" value="DnaA_N_dom"/>
</dbReference>
<dbReference type="InterPro" id="IPR038454">
    <property type="entry name" value="DnaA_N_sf"/>
</dbReference>
<dbReference type="InterPro" id="IPR027417">
    <property type="entry name" value="P-loop_NTPase"/>
</dbReference>
<dbReference type="InterPro" id="IPR010921">
    <property type="entry name" value="Trp_repressor/repl_initiator"/>
</dbReference>
<dbReference type="NCBIfam" id="TIGR00362">
    <property type="entry name" value="DnaA"/>
    <property type="match status" value="1"/>
</dbReference>
<dbReference type="PANTHER" id="PTHR30050">
    <property type="entry name" value="CHROMOSOMAL REPLICATION INITIATOR PROTEIN DNAA"/>
    <property type="match status" value="1"/>
</dbReference>
<dbReference type="PANTHER" id="PTHR30050:SF2">
    <property type="entry name" value="CHROMOSOMAL REPLICATION INITIATOR PROTEIN DNAA"/>
    <property type="match status" value="1"/>
</dbReference>
<dbReference type="Pfam" id="PF00308">
    <property type="entry name" value="Bac_DnaA"/>
    <property type="match status" value="1"/>
</dbReference>
<dbReference type="Pfam" id="PF08299">
    <property type="entry name" value="Bac_DnaA_C"/>
    <property type="match status" value="1"/>
</dbReference>
<dbReference type="Pfam" id="PF11638">
    <property type="entry name" value="DnaA_N"/>
    <property type="match status" value="1"/>
</dbReference>
<dbReference type="PRINTS" id="PR00051">
    <property type="entry name" value="DNAA"/>
</dbReference>
<dbReference type="SMART" id="SM00382">
    <property type="entry name" value="AAA"/>
    <property type="match status" value="1"/>
</dbReference>
<dbReference type="SMART" id="SM00760">
    <property type="entry name" value="Bac_DnaA_C"/>
    <property type="match status" value="1"/>
</dbReference>
<dbReference type="SUPFAM" id="SSF52540">
    <property type="entry name" value="P-loop containing nucleoside triphosphate hydrolases"/>
    <property type="match status" value="1"/>
</dbReference>
<dbReference type="SUPFAM" id="SSF48295">
    <property type="entry name" value="TrpR-like"/>
    <property type="match status" value="1"/>
</dbReference>
<dbReference type="PROSITE" id="PS01008">
    <property type="entry name" value="DNAA"/>
    <property type="match status" value="1"/>
</dbReference>
<reference key="1">
    <citation type="journal article" date="2003" name="Proc. Natl. Acad. Sci. U.S.A.">
        <title>The complete genome sequence of the carcinogenic bacterium Helicobacter hepaticus.</title>
        <authorList>
            <person name="Suerbaum S."/>
            <person name="Josenhans C."/>
            <person name="Sterzenbach T."/>
            <person name="Drescher B."/>
            <person name="Brandt P."/>
            <person name="Bell M."/>
            <person name="Droege M."/>
            <person name="Fartmann B."/>
            <person name="Fischer H.-P."/>
            <person name="Ge Z."/>
            <person name="Hoerster A."/>
            <person name="Holland R."/>
            <person name="Klein K."/>
            <person name="Koenig J."/>
            <person name="Macko L."/>
            <person name="Mendz G.L."/>
            <person name="Nyakatura G."/>
            <person name="Schauer D.B."/>
            <person name="Shen Z."/>
            <person name="Weber J."/>
            <person name="Frosch M."/>
            <person name="Fox J.G."/>
        </authorList>
    </citation>
    <scope>NUCLEOTIDE SEQUENCE [LARGE SCALE GENOMIC DNA]</scope>
    <source>
        <strain>ATCC 51449 / 3B1</strain>
    </source>
</reference>
<gene>
    <name evidence="1" type="primary">dnaA</name>
    <name type="ordered locus">HH_1110</name>
</gene>
<comment type="function">
    <text evidence="1">Plays an essential role in the initiation and regulation of chromosomal replication. ATP-DnaA binds to the origin of replication (oriC) to initiate formation of the DNA replication initiation complex once per cell cycle. Binds the DnaA box (a 9 base pair repeat at the origin) and separates the double-stranded (ds)DNA. Forms a right-handed helical filament on oriC DNA; dsDNA binds to the exterior of the filament while single-stranded (ss)DNA is stabiized in the filament's interior. The ATP-DnaA-oriC complex binds and stabilizes one strand of the AT-rich DNA unwinding element (DUE), permitting loading of DNA polymerase. After initiation quickly degrades to an ADP-DnaA complex that is not apt for DNA replication. Binds acidic phospholipids.</text>
</comment>
<comment type="subunit">
    <text evidence="1">Oligomerizes as a right-handed, spiral filament on DNA at oriC.</text>
</comment>
<comment type="subcellular location">
    <subcellularLocation>
        <location evidence="1">Cytoplasm</location>
    </subcellularLocation>
</comment>
<comment type="domain">
    <text evidence="1">Domain I is involved in oligomerization and binding regulators, domain II is flexibile and of varying length in different bacteria, domain III forms the AAA+ region, while domain IV binds dsDNA.</text>
</comment>
<comment type="similarity">
    <text evidence="1">Belongs to the DnaA family.</text>
</comment>
<sequence length="456" mass="52457">MKLKILHFTSGNKLHIDNILKKLKSKLSEFEYQFYISLMEYDENASRTDMKVFYVPNIFVANWIKSNHLESIIDAFEEESNNGVRPEIHIKVKEKKENVKSLKNNKSMLYFNTNGLSLNPFYTFENFVVGKSNEYAYTIAKLVLQQQASAYNPVLLYGKSGLGKTHLLNAIGNDVKEKNKNVLYVTSEDFLNDYMDKIKRKTMDSFRDKYRKCDYLLIDDVQFFGGKEGIQEELLHTFNTLHNSQKQIVMTSDKPPKEIKGLEERLRTRFEWGAMAEITNPELETKIAIIKSKCEVNRIVLENEVIDYIASNIYGNIRQIEGILSTINAHINLSPESSSLKIAKNVLKNYQIEKLEGITLDNIIKVVSKELNIKPSEIVSKERNRKVTFARRAVIYLAHSLMINSMNIIAKELGMKDHSSVSKALKAIKKEIAENSTTRNIIEDMKSKIQQSLDSV</sequence>
<proteinExistence type="inferred from homology"/>
<accession>Q7VH57</accession>
<evidence type="ECO:0000255" key="1">
    <source>
        <dbReference type="HAMAP-Rule" id="MF_00377"/>
    </source>
</evidence>
<feature type="chain" id="PRO_0000114187" description="Chromosomal replication initiator protein DnaA">
    <location>
        <begin position="1"/>
        <end position="456"/>
    </location>
</feature>
<feature type="region of interest" description="Domain I, interacts with DnaA modulators" evidence="1">
    <location>
        <begin position="1"/>
        <end position="83"/>
    </location>
</feature>
<feature type="region of interest" description="Domain II" evidence="1">
    <location>
        <begin position="83"/>
        <end position="116"/>
    </location>
</feature>
<feature type="region of interest" description="Domain III, AAA+ region" evidence="1">
    <location>
        <begin position="117"/>
        <end position="331"/>
    </location>
</feature>
<feature type="region of interest" description="Domain IV, binds dsDNA" evidence="1">
    <location>
        <begin position="332"/>
        <end position="456"/>
    </location>
</feature>
<feature type="binding site" evidence="1">
    <location>
        <position position="161"/>
    </location>
    <ligand>
        <name>ATP</name>
        <dbReference type="ChEBI" id="CHEBI:30616"/>
    </ligand>
</feature>
<feature type="binding site" evidence="1">
    <location>
        <position position="163"/>
    </location>
    <ligand>
        <name>ATP</name>
        <dbReference type="ChEBI" id="CHEBI:30616"/>
    </ligand>
</feature>
<feature type="binding site" evidence="1">
    <location>
        <position position="164"/>
    </location>
    <ligand>
        <name>ATP</name>
        <dbReference type="ChEBI" id="CHEBI:30616"/>
    </ligand>
</feature>
<feature type="binding site" evidence="1">
    <location>
        <position position="165"/>
    </location>
    <ligand>
        <name>ATP</name>
        <dbReference type="ChEBI" id="CHEBI:30616"/>
    </ligand>
</feature>
<keyword id="KW-0067">ATP-binding</keyword>
<keyword id="KW-0963">Cytoplasm</keyword>
<keyword id="KW-0235">DNA replication</keyword>
<keyword id="KW-0238">DNA-binding</keyword>
<keyword id="KW-0446">Lipid-binding</keyword>
<keyword id="KW-0547">Nucleotide-binding</keyword>
<keyword id="KW-1185">Reference proteome</keyword>
<name>DNAA_HELHP</name>
<protein>
    <recommendedName>
        <fullName evidence="1">Chromosomal replication initiator protein DnaA</fullName>
    </recommendedName>
</protein>
<organism>
    <name type="scientific">Helicobacter hepaticus (strain ATCC 51449 / 3B1)</name>
    <dbReference type="NCBI Taxonomy" id="235279"/>
    <lineage>
        <taxon>Bacteria</taxon>
        <taxon>Pseudomonadati</taxon>
        <taxon>Campylobacterota</taxon>
        <taxon>Epsilonproteobacteria</taxon>
        <taxon>Campylobacterales</taxon>
        <taxon>Helicobacteraceae</taxon>
        <taxon>Helicobacter</taxon>
    </lineage>
</organism>